<evidence type="ECO:0000250" key="1"/>
<evidence type="ECO:0000250" key="2">
    <source>
        <dbReference type="UniProtKB" id="O14291"/>
    </source>
</evidence>
<evidence type="ECO:0000256" key="3">
    <source>
        <dbReference type="SAM" id="MobiDB-lite"/>
    </source>
</evidence>
<evidence type="ECO:0000269" key="4">
    <source>
    </source>
</evidence>
<evidence type="ECO:0000269" key="5">
    <source>
    </source>
</evidence>
<evidence type="ECO:0000269" key="6">
    <source>
    </source>
</evidence>
<evidence type="ECO:0000305" key="7"/>
<evidence type="ECO:0000305" key="8">
    <source>
    </source>
</evidence>
<evidence type="ECO:0007744" key="9">
    <source>
    </source>
</evidence>
<evidence type="ECO:0007744" key="10">
    <source>
    </source>
</evidence>
<evidence type="ECO:0007744" key="11">
    <source>
    </source>
</evidence>
<evidence type="ECO:0007744" key="12">
    <source>
    </source>
</evidence>
<evidence type="ECO:0007744" key="13">
    <source>
    </source>
</evidence>
<evidence type="ECO:0007744" key="14">
    <source>
    </source>
</evidence>
<evidence type="ECO:0007744" key="15">
    <source>
    </source>
</evidence>
<reference key="1">
    <citation type="journal article" date="2001" name="Curr. Cancer Drug Targets">
        <title>Drug target discovery by gene expression analysis: cell cycle genes.</title>
        <authorList>
            <person name="Walker M.G."/>
        </authorList>
    </citation>
    <scope>NUCLEOTIDE SEQUENCE [MRNA]</scope>
</reference>
<reference key="2">
    <citation type="journal article" date="2004" name="Nat. Genet.">
        <title>Complete sequencing and characterization of 21,243 full-length human cDNAs.</title>
        <authorList>
            <person name="Ota T."/>
            <person name="Suzuki Y."/>
            <person name="Nishikawa T."/>
            <person name="Otsuki T."/>
            <person name="Sugiyama T."/>
            <person name="Irie R."/>
            <person name="Wakamatsu A."/>
            <person name="Hayashi K."/>
            <person name="Sato H."/>
            <person name="Nagai K."/>
            <person name="Kimura K."/>
            <person name="Makita H."/>
            <person name="Sekine M."/>
            <person name="Obayashi M."/>
            <person name="Nishi T."/>
            <person name="Shibahara T."/>
            <person name="Tanaka T."/>
            <person name="Ishii S."/>
            <person name="Yamamoto J."/>
            <person name="Saito K."/>
            <person name="Kawai Y."/>
            <person name="Isono Y."/>
            <person name="Nakamura Y."/>
            <person name="Nagahari K."/>
            <person name="Murakami K."/>
            <person name="Yasuda T."/>
            <person name="Iwayanagi T."/>
            <person name="Wagatsuma M."/>
            <person name="Shiratori A."/>
            <person name="Sudo H."/>
            <person name="Hosoiri T."/>
            <person name="Kaku Y."/>
            <person name="Kodaira H."/>
            <person name="Kondo H."/>
            <person name="Sugawara M."/>
            <person name="Takahashi M."/>
            <person name="Kanda K."/>
            <person name="Yokoi T."/>
            <person name="Furuya T."/>
            <person name="Kikkawa E."/>
            <person name="Omura Y."/>
            <person name="Abe K."/>
            <person name="Kamihara K."/>
            <person name="Katsuta N."/>
            <person name="Sato K."/>
            <person name="Tanikawa M."/>
            <person name="Yamazaki M."/>
            <person name="Ninomiya K."/>
            <person name="Ishibashi T."/>
            <person name="Yamashita H."/>
            <person name="Murakawa K."/>
            <person name="Fujimori K."/>
            <person name="Tanai H."/>
            <person name="Kimata M."/>
            <person name="Watanabe M."/>
            <person name="Hiraoka S."/>
            <person name="Chiba Y."/>
            <person name="Ishida S."/>
            <person name="Ono Y."/>
            <person name="Takiguchi S."/>
            <person name="Watanabe S."/>
            <person name="Yosida M."/>
            <person name="Hotuta T."/>
            <person name="Kusano J."/>
            <person name="Kanehori K."/>
            <person name="Takahashi-Fujii A."/>
            <person name="Hara H."/>
            <person name="Tanase T.-O."/>
            <person name="Nomura Y."/>
            <person name="Togiya S."/>
            <person name="Komai F."/>
            <person name="Hara R."/>
            <person name="Takeuchi K."/>
            <person name="Arita M."/>
            <person name="Imose N."/>
            <person name="Musashino K."/>
            <person name="Yuuki H."/>
            <person name="Oshima A."/>
            <person name="Sasaki N."/>
            <person name="Aotsuka S."/>
            <person name="Yoshikawa Y."/>
            <person name="Matsunawa H."/>
            <person name="Ichihara T."/>
            <person name="Shiohata N."/>
            <person name="Sano S."/>
            <person name="Moriya S."/>
            <person name="Momiyama H."/>
            <person name="Satoh N."/>
            <person name="Takami S."/>
            <person name="Terashima Y."/>
            <person name="Suzuki O."/>
            <person name="Nakagawa S."/>
            <person name="Senoh A."/>
            <person name="Mizoguchi H."/>
            <person name="Goto Y."/>
            <person name="Shimizu F."/>
            <person name="Wakebe H."/>
            <person name="Hishigaki H."/>
            <person name="Watanabe T."/>
            <person name="Sugiyama A."/>
            <person name="Takemoto M."/>
            <person name="Kawakami B."/>
            <person name="Yamazaki M."/>
            <person name="Watanabe K."/>
            <person name="Kumagai A."/>
            <person name="Itakura S."/>
            <person name="Fukuzumi Y."/>
            <person name="Fujimori Y."/>
            <person name="Komiyama M."/>
            <person name="Tashiro H."/>
            <person name="Tanigami A."/>
            <person name="Fujiwara T."/>
            <person name="Ono T."/>
            <person name="Yamada K."/>
            <person name="Fujii Y."/>
            <person name="Ozaki K."/>
            <person name="Hirao M."/>
            <person name="Ohmori Y."/>
            <person name="Kawabata A."/>
            <person name="Hikiji T."/>
            <person name="Kobatake N."/>
            <person name="Inagaki H."/>
            <person name="Ikema Y."/>
            <person name="Okamoto S."/>
            <person name="Okitani R."/>
            <person name="Kawakami T."/>
            <person name="Noguchi S."/>
            <person name="Itoh T."/>
            <person name="Shigeta K."/>
            <person name="Senba T."/>
            <person name="Matsumura K."/>
            <person name="Nakajima Y."/>
            <person name="Mizuno T."/>
            <person name="Morinaga M."/>
            <person name="Sasaki M."/>
            <person name="Togashi T."/>
            <person name="Oyama M."/>
            <person name="Hata H."/>
            <person name="Watanabe M."/>
            <person name="Komatsu T."/>
            <person name="Mizushima-Sugano J."/>
            <person name="Satoh T."/>
            <person name="Shirai Y."/>
            <person name="Takahashi Y."/>
            <person name="Nakagawa K."/>
            <person name="Okumura K."/>
            <person name="Nagase T."/>
            <person name="Nomura N."/>
            <person name="Kikuchi H."/>
            <person name="Masuho Y."/>
            <person name="Yamashita R."/>
            <person name="Nakai K."/>
            <person name="Yada T."/>
            <person name="Nakamura Y."/>
            <person name="Ohara O."/>
            <person name="Isogai T."/>
            <person name="Sugano S."/>
        </authorList>
    </citation>
    <scope>NUCLEOTIDE SEQUENCE [LARGE SCALE MRNA]</scope>
    <source>
        <tissue>Ovary</tissue>
    </source>
</reference>
<reference key="3">
    <citation type="submission" date="2005-07" db="EMBL/GenBank/DDBJ databases">
        <authorList>
            <person name="Mural R.J."/>
            <person name="Istrail S."/>
            <person name="Sutton G.G."/>
            <person name="Florea L."/>
            <person name="Halpern A.L."/>
            <person name="Mobarry C.M."/>
            <person name="Lippert R."/>
            <person name="Walenz B."/>
            <person name="Shatkay H."/>
            <person name="Dew I."/>
            <person name="Miller J.R."/>
            <person name="Flanigan M.J."/>
            <person name="Edwards N.J."/>
            <person name="Bolanos R."/>
            <person name="Fasulo D."/>
            <person name="Halldorsson B.V."/>
            <person name="Hannenhalli S."/>
            <person name="Turner R."/>
            <person name="Yooseph S."/>
            <person name="Lu F."/>
            <person name="Nusskern D.R."/>
            <person name="Shue B.C."/>
            <person name="Zheng X.H."/>
            <person name="Zhong F."/>
            <person name="Delcher A.L."/>
            <person name="Huson D.H."/>
            <person name="Kravitz S.A."/>
            <person name="Mouchard L."/>
            <person name="Reinert K."/>
            <person name="Remington K.A."/>
            <person name="Clark A.G."/>
            <person name="Waterman M.S."/>
            <person name="Eichler E.E."/>
            <person name="Adams M.D."/>
            <person name="Hunkapiller M.W."/>
            <person name="Myers E.W."/>
            <person name="Venter J.C."/>
        </authorList>
    </citation>
    <scope>NUCLEOTIDE SEQUENCE [LARGE SCALE GENOMIC DNA]</scope>
</reference>
<reference key="4">
    <citation type="journal article" date="2004" name="Genome Res.">
        <title>The status, quality, and expansion of the NIH full-length cDNA project: the Mammalian Gene Collection (MGC).</title>
        <authorList>
            <consortium name="The MGC Project Team"/>
        </authorList>
    </citation>
    <scope>NUCLEOTIDE SEQUENCE [LARGE SCALE MRNA]</scope>
    <source>
        <tissue>Lung</tissue>
    </source>
</reference>
<reference key="5">
    <citation type="journal article" date="2005" name="Mol. Cell">
        <title>Sororin, a substrate of the anaphase-promoting complex, is required for sister chromatid cohesion in vertebrates.</title>
        <authorList>
            <person name="Rankin S."/>
            <person name="Ayad N.G."/>
            <person name="Kirschner M.W."/>
        </authorList>
    </citation>
    <scope>FUNCTION</scope>
    <scope>SUBCELLULAR LOCATION</scope>
    <scope>PHOSPHORYLATION</scope>
    <scope>UBIQUITINATION</scope>
    <scope>IDENTIFICATION IN A COMPLEX WITH SMC1A; SMC3; RAD21; PDS5A AND PDS5B</scope>
</reference>
<reference key="6">
    <citation type="journal article" date="2005" name="Mol. Cell">
        <authorList>
            <person name="Rankin S."/>
            <person name="Ayad N.G."/>
            <person name="Kirschner M.W."/>
        </authorList>
    </citation>
    <scope>ERRATUM OF PUBMED:15837422</scope>
</reference>
<reference key="7">
    <citation type="journal article" date="2006" name="Cell">
        <title>Global, in vivo, and site-specific phosphorylation dynamics in signaling networks.</title>
        <authorList>
            <person name="Olsen J.V."/>
            <person name="Blagoev B."/>
            <person name="Gnad F."/>
            <person name="Macek B."/>
            <person name="Kumar C."/>
            <person name="Mortensen P."/>
            <person name="Mann M."/>
        </authorList>
    </citation>
    <scope>PHOSPHORYLATION [LARGE SCALE ANALYSIS] AT SER-75</scope>
    <scope>IDENTIFICATION BY MASS SPECTROMETRY [LARGE SCALE ANALYSIS]</scope>
    <source>
        <tissue>Cervix carcinoma</tissue>
    </source>
</reference>
<reference key="8">
    <citation type="journal article" date="2006" name="Nat. Biotechnol.">
        <title>A probability-based approach for high-throughput protein phosphorylation analysis and site localization.</title>
        <authorList>
            <person name="Beausoleil S.A."/>
            <person name="Villen J."/>
            <person name="Gerber S.A."/>
            <person name="Rush J."/>
            <person name="Gygi S.P."/>
        </authorList>
    </citation>
    <scope>IDENTIFICATION BY MASS SPECTROMETRY [LARGE SCALE ANALYSIS]</scope>
    <source>
        <tissue>Cervix carcinoma</tissue>
    </source>
</reference>
<reference key="9">
    <citation type="journal article" date="2007" name="Curr. Biol.">
        <title>Sororin is required for stable binding of cohesin to chromatin and for sister chromatid cohesion in interphase.</title>
        <authorList>
            <person name="Schmitz J."/>
            <person name="Watrin E."/>
            <person name="Lenart P."/>
            <person name="Mechtler K."/>
            <person name="Peters J.M."/>
        </authorList>
    </citation>
    <scope>FUNCTION</scope>
    <scope>INTERACTION WITH THE COHESIN COMPLEX</scope>
</reference>
<reference key="10">
    <citation type="journal article" date="2008" name="J. Proteome Res.">
        <title>Combining protein-based IMAC, peptide-based IMAC, and MudPIT for efficient phosphoproteomic analysis.</title>
        <authorList>
            <person name="Cantin G.T."/>
            <person name="Yi W."/>
            <person name="Lu B."/>
            <person name="Park S.K."/>
            <person name="Xu T."/>
            <person name="Lee J.-D."/>
            <person name="Yates J.R. III"/>
        </authorList>
    </citation>
    <scope>PHOSPHORYLATION [LARGE SCALE ANALYSIS] AT SER-75</scope>
    <scope>IDENTIFICATION BY MASS SPECTROMETRY [LARGE SCALE ANALYSIS]</scope>
    <source>
        <tissue>Cervix carcinoma</tissue>
    </source>
</reference>
<reference key="11">
    <citation type="journal article" date="2008" name="Proc. Natl. Acad. Sci. U.S.A.">
        <title>A quantitative atlas of mitotic phosphorylation.</title>
        <authorList>
            <person name="Dephoure N."/>
            <person name="Zhou C."/>
            <person name="Villen J."/>
            <person name="Beausoleil S.A."/>
            <person name="Bakalarski C.E."/>
            <person name="Elledge S.J."/>
            <person name="Gygi S.P."/>
        </authorList>
    </citation>
    <scope>PHOSPHORYLATION [LARGE SCALE ANALYSIS] AT SER-33; SER-35; THR-115 AND SER-209</scope>
    <scope>IDENTIFICATION BY MASS SPECTROMETRY [LARGE SCALE ANALYSIS]</scope>
    <source>
        <tissue>Cervix carcinoma</tissue>
    </source>
</reference>
<reference key="12">
    <citation type="journal article" date="2009" name="Anal. Chem.">
        <title>Lys-N and trypsin cover complementary parts of the phosphoproteome in a refined SCX-based approach.</title>
        <authorList>
            <person name="Gauci S."/>
            <person name="Helbig A.O."/>
            <person name="Slijper M."/>
            <person name="Krijgsveld J."/>
            <person name="Heck A.J."/>
            <person name="Mohammed S."/>
        </authorList>
    </citation>
    <scope>IDENTIFICATION BY MASS SPECTROMETRY [LARGE SCALE ANALYSIS]</scope>
</reference>
<reference key="13">
    <citation type="journal article" date="2009" name="Sci. Signal.">
        <title>Quantitative phosphoproteomic analysis of T cell receptor signaling reveals system-wide modulation of protein-protein interactions.</title>
        <authorList>
            <person name="Mayya V."/>
            <person name="Lundgren D.H."/>
            <person name="Hwang S.-I."/>
            <person name="Rezaul K."/>
            <person name="Wu L."/>
            <person name="Eng J.K."/>
            <person name="Rodionov V."/>
            <person name="Han D.K."/>
        </authorList>
    </citation>
    <scope>PHOSPHORYLATION [LARGE SCALE ANALYSIS] AT SER-107</scope>
    <scope>IDENTIFICATION BY MASS SPECTROMETRY [LARGE SCALE ANALYSIS]</scope>
    <source>
        <tissue>Leukemic T-cell</tissue>
    </source>
</reference>
<reference key="14">
    <citation type="journal article" date="2010" name="Cell">
        <title>Sororin mediates sister chromatid cohesion by antagonizing wapl.</title>
        <authorList>
            <person name="Nishiyama T."/>
            <person name="Ladurner R."/>
            <person name="Schmitz J."/>
            <person name="Kreidl E."/>
            <person name="Schleiffer A."/>
            <person name="Bhaskara V."/>
            <person name="Bando M."/>
            <person name="Shirahige K."/>
            <person name="Hyman A.A."/>
            <person name="Mechtler K."/>
            <person name="Peters J.M."/>
        </authorList>
    </citation>
    <scope>FUNCTION</scope>
    <scope>INTERACTION WITH PDS5A AND PDS5B</scope>
    <scope>MUTAGENESIS OF 166-PHE--PHE-168</scope>
    <scope>FGF MOTIF</scope>
</reference>
<reference key="15">
    <citation type="journal article" date="2010" name="Sci. Signal.">
        <title>Quantitative phosphoproteomics reveals widespread full phosphorylation site occupancy during mitosis.</title>
        <authorList>
            <person name="Olsen J.V."/>
            <person name="Vermeulen M."/>
            <person name="Santamaria A."/>
            <person name="Kumar C."/>
            <person name="Miller M.L."/>
            <person name="Jensen L.J."/>
            <person name="Gnad F."/>
            <person name="Cox J."/>
            <person name="Jensen T.S."/>
            <person name="Nigg E.A."/>
            <person name="Brunak S."/>
            <person name="Mann M."/>
        </authorList>
    </citation>
    <scope>PHOSPHORYLATION [LARGE SCALE ANALYSIS] AT SER-21; SER-75; SER-79 AND SER-209</scope>
    <scope>IDENTIFICATION BY MASS SPECTROMETRY [LARGE SCALE ANALYSIS]</scope>
    <source>
        <tissue>Cervix carcinoma</tissue>
    </source>
</reference>
<reference key="16">
    <citation type="journal article" date="2011" name="Sci. Signal.">
        <title>System-wide temporal characterization of the proteome and phosphoproteome of human embryonic stem cell differentiation.</title>
        <authorList>
            <person name="Rigbolt K.T."/>
            <person name="Prokhorova T.A."/>
            <person name="Akimov V."/>
            <person name="Henningsen J."/>
            <person name="Johansen P.T."/>
            <person name="Kratchmarova I."/>
            <person name="Kassem M."/>
            <person name="Mann M."/>
            <person name="Olsen J.V."/>
            <person name="Blagoev B."/>
        </authorList>
    </citation>
    <scope>PHOSPHORYLATION [LARGE SCALE ANALYSIS] AT SER-209</scope>
    <scope>IDENTIFICATION BY MASS SPECTROMETRY [LARGE SCALE ANALYSIS]</scope>
</reference>
<reference key="17">
    <citation type="journal article" date="2013" name="J. Proteome Res.">
        <title>Toward a comprehensive characterization of a human cancer cell phosphoproteome.</title>
        <authorList>
            <person name="Zhou H."/>
            <person name="Di Palma S."/>
            <person name="Preisinger C."/>
            <person name="Peng M."/>
            <person name="Polat A.N."/>
            <person name="Heck A.J."/>
            <person name="Mohammed S."/>
        </authorList>
    </citation>
    <scope>PHOSPHORYLATION [LARGE SCALE ANALYSIS] AT SER-21; SER-33; SER-75; SER-79; SER-83; THR-98; SER-107; THR-111; SER-154 AND THR-159</scope>
    <scope>IDENTIFICATION BY MASS SPECTROMETRY [LARGE SCALE ANALYSIS]</scope>
    <source>
        <tissue>Cervix carcinoma</tissue>
        <tissue>Erythroleukemia</tissue>
    </source>
</reference>
<feature type="chain" id="PRO_0000089449" description="Sororin">
    <location>
        <begin position="1"/>
        <end position="252"/>
    </location>
</feature>
<feature type="region of interest" description="Disordered" evidence="3">
    <location>
        <begin position="1"/>
        <end position="48"/>
    </location>
</feature>
<feature type="region of interest" description="Disordered" evidence="3">
    <location>
        <begin position="72"/>
        <end position="142"/>
    </location>
</feature>
<feature type="region of interest" description="Disordered" evidence="3">
    <location>
        <begin position="199"/>
        <end position="222"/>
    </location>
</feature>
<feature type="region of interest" description="C-terminal Sororin domain" evidence="2">
    <location>
        <begin position="230"/>
        <end position="252"/>
    </location>
</feature>
<feature type="short sequence motif" description="KEN box">
    <location>
        <begin position="88"/>
        <end position="90"/>
    </location>
</feature>
<feature type="short sequence motif" description="FGF motif">
    <location>
        <begin position="166"/>
        <end position="168"/>
    </location>
</feature>
<feature type="compositionally biased region" description="Basic and acidic residues" evidence="3">
    <location>
        <begin position="86"/>
        <end position="104"/>
    </location>
</feature>
<feature type="compositionally biased region" description="Low complexity" evidence="3">
    <location>
        <begin position="105"/>
        <end position="116"/>
    </location>
</feature>
<feature type="compositionally biased region" description="Basic and acidic residues" evidence="3">
    <location>
        <begin position="124"/>
        <end position="140"/>
    </location>
</feature>
<feature type="modified residue" description="Phosphoserine" evidence="13 15">
    <location>
        <position position="21"/>
    </location>
</feature>
<feature type="modified residue" description="Phosphoserine" evidence="11 15">
    <location>
        <position position="33"/>
    </location>
</feature>
<feature type="modified residue" description="Phosphoserine" evidence="11">
    <location>
        <position position="35"/>
    </location>
</feature>
<feature type="modified residue" description="Phosphoserine" evidence="9 10 13 15">
    <location>
        <position position="75"/>
    </location>
</feature>
<feature type="modified residue" description="Phosphoserine" evidence="13 15">
    <location>
        <position position="79"/>
    </location>
</feature>
<feature type="modified residue" description="Phosphoserine" evidence="15">
    <location>
        <position position="83"/>
    </location>
</feature>
<feature type="modified residue" description="Phosphothreonine" evidence="15">
    <location>
        <position position="98"/>
    </location>
</feature>
<feature type="modified residue" description="Phosphoserine" evidence="12 15">
    <location>
        <position position="107"/>
    </location>
</feature>
<feature type="modified residue" description="Phosphothreonine" evidence="15">
    <location>
        <position position="111"/>
    </location>
</feature>
<feature type="modified residue" description="Phosphothreonine" evidence="11">
    <location>
        <position position="115"/>
    </location>
</feature>
<feature type="modified residue" description="Phosphoserine" evidence="15">
    <location>
        <position position="154"/>
    </location>
</feature>
<feature type="modified residue" description="Phosphothreonine" evidence="15">
    <location>
        <position position="159"/>
    </location>
</feature>
<feature type="modified residue" description="Phosphoserine" evidence="11 13 14">
    <location>
        <position position="209"/>
    </location>
</feature>
<feature type="sequence variant" id="VAR_050777" description="In dbSNP:rs34020666.">
    <original>S</original>
    <variation>Y</variation>
    <location>
        <position position="156"/>
    </location>
</feature>
<feature type="mutagenesis site" description="Alters interaction with PDS5A and PDS5B and the cohesin complex." evidence="6">
    <original>FGF</original>
    <variation>AGA</variation>
    <location>
        <begin position="166"/>
        <end position="168"/>
    </location>
</feature>
<comment type="function">
    <text evidence="4 5 6">Regulator of sister chromatid cohesion in mitosis stabilizing cohesin complex association with chromatin. May antagonize the action of WAPL which stimulates cohesin dissociation from chromatin. Cohesion ensures that chromosome partitioning is accurate in both meiotic and mitotic cells and plays an important role in DNA repair. Required for efficient DNA double-stranded break repair.</text>
</comment>
<comment type="subunit">
    <text evidence="1 4 5 6">Interacts with the APC/C complex (By similarity). Interacts with the chromatin-bound cohesin complex; the interaction is indirect, occurs after DNA replication and requires acetylation of the cohesin component SMC3. Interacts (via the FGF motif) with PDS5A and PDS5B; the interaction is direct and prevents the interaction of PDS5A with WAPL.</text>
</comment>
<comment type="interaction">
    <interactant intactId="EBI-718805">
        <id>Q96FF9</id>
    </interactant>
    <interactant intactId="EBI-747693">
        <id>P41227</id>
        <label>NAA10</label>
    </interactant>
    <organismsDiffer>false</organismsDiffer>
    <experiments>7</experiments>
</comment>
<comment type="interaction">
    <interactant intactId="EBI-718805">
        <id>Q96FF9</id>
    </interactant>
    <interactant intactId="EBI-2585120">
        <id>Q9BSU3</id>
        <label>NAA11</label>
    </interactant>
    <organismsDiffer>false</organismsDiffer>
    <experiments>3</experiments>
</comment>
<comment type="interaction">
    <interactant intactId="EBI-718805">
        <id>Q96FF9</id>
    </interactant>
    <interactant intactId="EBI-1175454">
        <id>Q29RF7</id>
        <label>PDS5A</label>
    </interactant>
    <organismsDiffer>false</organismsDiffer>
    <experiments>3</experiments>
</comment>
<comment type="interaction">
    <interactant intactId="EBI-718805">
        <id>Q96FF9</id>
    </interactant>
    <interactant intactId="EBI-989069">
        <id>Q5FBB7</id>
        <label>SGO1</label>
    </interactant>
    <organismsDiffer>false</organismsDiffer>
    <experiments>4</experiments>
</comment>
<comment type="interaction">
    <interactant intactId="EBI-718805">
        <id>Q96FF9</id>
    </interactant>
    <interactant intactId="EBI-80690">
        <id>Q14683</id>
        <label>SMC1A</label>
    </interactant>
    <organismsDiffer>false</organismsDiffer>
    <experiments>8</experiments>
</comment>
<comment type="subcellular location">
    <subcellularLocation>
        <location evidence="4">Nucleus</location>
    </subcellularLocation>
    <subcellularLocation>
        <location evidence="4">Chromosome</location>
    </subcellularLocation>
    <subcellularLocation>
        <location evidence="4">Cytoplasm</location>
    </subcellularLocation>
    <text>Associates with nuclear chromatin from S phase until metaphase and is released in the cytoplasm upon nuclear envelope breakdown.</text>
</comment>
<comment type="domain">
    <text evidence="1">The KEN box is required for the association with the APC/C complex.</text>
</comment>
<comment type="PTM">
    <text evidence="4">Phosphorylated. Phosphorylation, as cells enter mitosis, disrupts the interaction with PDS5A and relieves the inhibition of WAPL by CDCA5.</text>
</comment>
<comment type="PTM">
    <text evidence="8">Ubiquitinated by the APC/C complex in G1, leading to its degradation.</text>
</comment>
<comment type="miscellaneous">
    <text>Named sororin after the Latin word 'soror', which means 'sister', because of its critical role in sister chromatid cohesion.</text>
</comment>
<comment type="similarity">
    <text evidence="7">Belongs to the sororin family.</text>
</comment>
<accession>Q96FF9</accession>
<accession>A8K625</accession>
<name>CDCA5_HUMAN</name>
<proteinExistence type="evidence at protein level"/>
<gene>
    <name type="primary">CDCA5</name>
</gene>
<dbReference type="EMBL" id="BG354578">
    <property type="status" value="NOT_ANNOTATED_CDS"/>
    <property type="molecule type" value="mRNA"/>
</dbReference>
<dbReference type="EMBL" id="AK291490">
    <property type="protein sequence ID" value="BAF84179.1"/>
    <property type="molecule type" value="mRNA"/>
</dbReference>
<dbReference type="EMBL" id="CH471076">
    <property type="protein sequence ID" value="EAW74342.1"/>
    <property type="molecule type" value="Genomic_DNA"/>
</dbReference>
<dbReference type="EMBL" id="BC011000">
    <property type="protein sequence ID" value="AAH11000.1"/>
    <property type="molecule type" value="mRNA"/>
</dbReference>
<dbReference type="CCDS" id="CCDS8091.1"/>
<dbReference type="RefSeq" id="NP_542399.1">
    <property type="nucleotide sequence ID" value="NM_080668.4"/>
</dbReference>
<dbReference type="BioGRID" id="125225">
    <property type="interactions" value="145"/>
</dbReference>
<dbReference type="CORUM" id="Q96FF9"/>
<dbReference type="DIP" id="DIP-47377N"/>
<dbReference type="ELM" id="Q96FF9"/>
<dbReference type="FunCoup" id="Q96FF9">
    <property type="interactions" value="1138"/>
</dbReference>
<dbReference type="IntAct" id="Q96FF9">
    <property type="interactions" value="56"/>
</dbReference>
<dbReference type="MINT" id="Q96FF9"/>
<dbReference type="STRING" id="9606.ENSP00000275517"/>
<dbReference type="GlyGen" id="Q96FF9">
    <property type="glycosylation" value="3 sites, 1 O-linked glycan (1 site)"/>
</dbReference>
<dbReference type="iPTMnet" id="Q96FF9"/>
<dbReference type="PhosphoSitePlus" id="Q96FF9"/>
<dbReference type="BioMuta" id="CDCA5"/>
<dbReference type="DMDM" id="68565257"/>
<dbReference type="jPOST" id="Q96FF9"/>
<dbReference type="MassIVE" id="Q96FF9"/>
<dbReference type="PaxDb" id="9606-ENSP00000275517"/>
<dbReference type="PeptideAtlas" id="Q96FF9"/>
<dbReference type="ProteomicsDB" id="76523"/>
<dbReference type="Pumba" id="Q96FF9"/>
<dbReference type="Antibodypedia" id="15765">
    <property type="antibodies" value="113 antibodies from 21 providers"/>
</dbReference>
<dbReference type="DNASU" id="113130"/>
<dbReference type="Ensembl" id="ENST00000275517.8">
    <property type="protein sequence ID" value="ENSP00000275517.3"/>
    <property type="gene ID" value="ENSG00000146670.10"/>
</dbReference>
<dbReference type="GeneID" id="113130"/>
<dbReference type="KEGG" id="hsa:113130"/>
<dbReference type="MANE-Select" id="ENST00000275517.8">
    <property type="protein sequence ID" value="ENSP00000275517.3"/>
    <property type="RefSeq nucleotide sequence ID" value="NM_080668.4"/>
    <property type="RefSeq protein sequence ID" value="NP_542399.1"/>
</dbReference>
<dbReference type="UCSC" id="uc001ocp.3">
    <property type="organism name" value="human"/>
</dbReference>
<dbReference type="AGR" id="HGNC:14626"/>
<dbReference type="CTD" id="113130"/>
<dbReference type="DisGeNET" id="113130"/>
<dbReference type="GeneCards" id="CDCA5"/>
<dbReference type="HGNC" id="HGNC:14626">
    <property type="gene designation" value="CDCA5"/>
</dbReference>
<dbReference type="HPA" id="ENSG00000146670">
    <property type="expression patterns" value="Group enriched (bone marrow, lymphoid tissue, testis)"/>
</dbReference>
<dbReference type="MIM" id="609374">
    <property type="type" value="gene"/>
</dbReference>
<dbReference type="neXtProt" id="NX_Q96FF9"/>
<dbReference type="OpenTargets" id="ENSG00000146670"/>
<dbReference type="PharmGKB" id="PA26278"/>
<dbReference type="VEuPathDB" id="HostDB:ENSG00000146670"/>
<dbReference type="eggNOG" id="ENOG502S4XG">
    <property type="taxonomic scope" value="Eukaryota"/>
</dbReference>
<dbReference type="GeneTree" id="ENSGT00390000010028"/>
<dbReference type="HOGENOM" id="CLU_088614_0_0_1"/>
<dbReference type="InParanoid" id="Q96FF9"/>
<dbReference type="OMA" id="KKVQQID"/>
<dbReference type="OrthoDB" id="9949198at2759"/>
<dbReference type="PAN-GO" id="Q96FF9">
    <property type="GO annotations" value="6 GO annotations based on evolutionary models"/>
</dbReference>
<dbReference type="PhylomeDB" id="Q96FF9"/>
<dbReference type="TreeFam" id="TF101070"/>
<dbReference type="PathwayCommons" id="Q96FF9"/>
<dbReference type="Reactome" id="R-HSA-2467813">
    <property type="pathway name" value="Separation of Sister Chromatids"/>
</dbReference>
<dbReference type="Reactome" id="R-HSA-2468052">
    <property type="pathway name" value="Establishment of Sister Chromatid Cohesion"/>
</dbReference>
<dbReference type="Reactome" id="R-HSA-2500257">
    <property type="pathway name" value="Resolution of Sister Chromatid Cohesion"/>
</dbReference>
<dbReference type="SignaLink" id="Q96FF9"/>
<dbReference type="SIGNOR" id="Q96FF9"/>
<dbReference type="BioGRID-ORCS" id="113130">
    <property type="hits" value="568 hits in 1159 CRISPR screens"/>
</dbReference>
<dbReference type="ChiTaRS" id="CDCA5">
    <property type="organism name" value="human"/>
</dbReference>
<dbReference type="GeneWiki" id="CDCA5"/>
<dbReference type="GenomeRNAi" id="113130"/>
<dbReference type="Pharos" id="Q96FF9">
    <property type="development level" value="Tbio"/>
</dbReference>
<dbReference type="PRO" id="PR:Q96FF9"/>
<dbReference type="Proteomes" id="UP000005640">
    <property type="component" value="Chromosome 11"/>
</dbReference>
<dbReference type="RNAct" id="Q96FF9">
    <property type="molecule type" value="protein"/>
</dbReference>
<dbReference type="Bgee" id="ENSG00000146670">
    <property type="expression patterns" value="Expressed in primordial germ cell in gonad and 119 other cell types or tissues"/>
</dbReference>
<dbReference type="ExpressionAtlas" id="Q96FF9">
    <property type="expression patterns" value="baseline and differential"/>
</dbReference>
<dbReference type="GO" id="GO:0000785">
    <property type="term" value="C:chromatin"/>
    <property type="evidence" value="ECO:0000250"/>
    <property type="project" value="UniProtKB"/>
</dbReference>
<dbReference type="GO" id="GO:0005694">
    <property type="term" value="C:chromosome"/>
    <property type="evidence" value="ECO:0000304"/>
    <property type="project" value="Reactome"/>
</dbReference>
<dbReference type="GO" id="GO:0000775">
    <property type="term" value="C:chromosome, centromeric region"/>
    <property type="evidence" value="ECO:0000304"/>
    <property type="project" value="Reactome"/>
</dbReference>
<dbReference type="GO" id="GO:0005737">
    <property type="term" value="C:cytoplasm"/>
    <property type="evidence" value="ECO:0000250"/>
    <property type="project" value="UniProtKB"/>
</dbReference>
<dbReference type="GO" id="GO:0005829">
    <property type="term" value="C:cytosol"/>
    <property type="evidence" value="ECO:0000304"/>
    <property type="project" value="Reactome"/>
</dbReference>
<dbReference type="GO" id="GO:0005654">
    <property type="term" value="C:nucleoplasm"/>
    <property type="evidence" value="ECO:0000314"/>
    <property type="project" value="HPA"/>
</dbReference>
<dbReference type="GO" id="GO:0005634">
    <property type="term" value="C:nucleus"/>
    <property type="evidence" value="ECO:0000250"/>
    <property type="project" value="UniProtKB"/>
</dbReference>
<dbReference type="GO" id="GO:0003682">
    <property type="term" value="F:chromatin binding"/>
    <property type="evidence" value="ECO:0000304"/>
    <property type="project" value="UniProtKB"/>
</dbReference>
<dbReference type="GO" id="GO:0044877">
    <property type="term" value="F:protein-containing complex binding"/>
    <property type="evidence" value="ECO:0000314"/>
    <property type="project" value="UniProtKB"/>
</dbReference>
<dbReference type="GO" id="GO:0051301">
    <property type="term" value="P:cell division"/>
    <property type="evidence" value="ECO:0007669"/>
    <property type="project" value="UniProtKB-KW"/>
</dbReference>
<dbReference type="GO" id="GO:0006302">
    <property type="term" value="P:double-strand break repair"/>
    <property type="evidence" value="ECO:0000315"/>
    <property type="project" value="UniProtKB"/>
</dbReference>
<dbReference type="GO" id="GO:0007080">
    <property type="term" value="P:mitotic metaphase chromosome alignment"/>
    <property type="evidence" value="ECO:0000318"/>
    <property type="project" value="GO_Central"/>
</dbReference>
<dbReference type="GO" id="GO:0007064">
    <property type="term" value="P:mitotic sister chromatid cohesion"/>
    <property type="evidence" value="ECO:0000315"/>
    <property type="project" value="UniProtKB"/>
</dbReference>
<dbReference type="GO" id="GO:0031536">
    <property type="term" value="P:positive regulation of exit from mitosis"/>
    <property type="evidence" value="ECO:0000318"/>
    <property type="project" value="GO_Central"/>
</dbReference>
<dbReference type="InterPro" id="IPR018605">
    <property type="entry name" value="Sororin"/>
</dbReference>
<dbReference type="PANTHER" id="PTHR31092">
    <property type="entry name" value="SORORIN"/>
    <property type="match status" value="1"/>
</dbReference>
<dbReference type="PANTHER" id="PTHR31092:SF2">
    <property type="entry name" value="SORORIN"/>
    <property type="match status" value="1"/>
</dbReference>
<dbReference type="Pfam" id="PF25220">
    <property type="entry name" value="Sororin_C"/>
    <property type="match status" value="1"/>
</dbReference>
<dbReference type="Pfam" id="PF09666">
    <property type="entry name" value="Sororin_middle"/>
    <property type="match status" value="1"/>
</dbReference>
<sequence length="252" mass="27601">MSGRRTRSGGAAQRSGPRAPSPTKPLRRSQRKSGSELPSILPEIWPKTPSAAAVRKPIVLKRIVAHAVEVPAVQSPRRSPRISFFLEKENEPPGRELTKEDLFKTHSVPATPTSTPVPNPEAESSSKEGELDARDLEMSKKVRRSYSRLETLGSASTSTPGRRSCFGFEGLLGAEDLSGVSPVVCSKLTEVPRVCAKPWAPDMTLPGISPPPEKQKRKKKKMPEILKTELDEWAAAMNAEFEAAEQFDLLVE</sequence>
<protein>
    <recommendedName>
        <fullName>Sororin</fullName>
    </recommendedName>
    <alternativeName>
        <fullName>Cell division cycle-associated protein 5</fullName>
    </alternativeName>
    <alternativeName>
        <fullName>p35</fullName>
    </alternativeName>
</protein>
<keyword id="KW-0131">Cell cycle</keyword>
<keyword id="KW-0132">Cell division</keyword>
<keyword id="KW-0158">Chromosome</keyword>
<keyword id="KW-0963">Cytoplasm</keyword>
<keyword id="KW-0498">Mitosis</keyword>
<keyword id="KW-0539">Nucleus</keyword>
<keyword id="KW-0597">Phosphoprotein</keyword>
<keyword id="KW-1267">Proteomics identification</keyword>
<keyword id="KW-1185">Reference proteome</keyword>
<keyword id="KW-0832">Ubl conjugation</keyword>
<organism>
    <name type="scientific">Homo sapiens</name>
    <name type="common">Human</name>
    <dbReference type="NCBI Taxonomy" id="9606"/>
    <lineage>
        <taxon>Eukaryota</taxon>
        <taxon>Metazoa</taxon>
        <taxon>Chordata</taxon>
        <taxon>Craniata</taxon>
        <taxon>Vertebrata</taxon>
        <taxon>Euteleostomi</taxon>
        <taxon>Mammalia</taxon>
        <taxon>Eutheria</taxon>
        <taxon>Euarchontoglires</taxon>
        <taxon>Primates</taxon>
        <taxon>Haplorrhini</taxon>
        <taxon>Catarrhini</taxon>
        <taxon>Hominidae</taxon>
        <taxon>Homo</taxon>
    </lineage>
</organism>